<feature type="chain" id="PRO_1000120049" description="ATP-dependent 6-phosphofructokinase">
    <location>
        <begin position="1"/>
        <end position="319"/>
    </location>
</feature>
<feature type="active site" description="Proton acceptor" evidence="1">
    <location>
        <position position="127"/>
    </location>
</feature>
<feature type="binding site" evidence="1">
    <location>
        <position position="11"/>
    </location>
    <ligand>
        <name>ATP</name>
        <dbReference type="ChEBI" id="CHEBI:30616"/>
    </ligand>
</feature>
<feature type="binding site" evidence="1">
    <location>
        <begin position="21"/>
        <end position="25"/>
    </location>
    <ligand>
        <name>ADP</name>
        <dbReference type="ChEBI" id="CHEBI:456216"/>
        <note>allosteric activator; ligand shared between dimeric partners</note>
    </ligand>
</feature>
<feature type="binding site" evidence="1">
    <location>
        <begin position="72"/>
        <end position="73"/>
    </location>
    <ligand>
        <name>ATP</name>
        <dbReference type="ChEBI" id="CHEBI:30616"/>
    </ligand>
</feature>
<feature type="binding site" evidence="1">
    <location>
        <begin position="102"/>
        <end position="105"/>
    </location>
    <ligand>
        <name>ATP</name>
        <dbReference type="ChEBI" id="CHEBI:30616"/>
    </ligand>
</feature>
<feature type="binding site" evidence="1">
    <location>
        <position position="103"/>
    </location>
    <ligand>
        <name>Mg(2+)</name>
        <dbReference type="ChEBI" id="CHEBI:18420"/>
        <note>catalytic</note>
    </ligand>
</feature>
<feature type="binding site" description="in other chain" evidence="1">
    <location>
        <begin position="125"/>
        <end position="127"/>
    </location>
    <ligand>
        <name>substrate</name>
        <note>ligand shared between dimeric partners</note>
    </ligand>
</feature>
<feature type="binding site" description="in other chain" evidence="1">
    <location>
        <position position="154"/>
    </location>
    <ligand>
        <name>ADP</name>
        <dbReference type="ChEBI" id="CHEBI:456216"/>
        <note>allosteric activator; ligand shared between dimeric partners</note>
    </ligand>
</feature>
<feature type="binding site" evidence="1">
    <location>
        <position position="162"/>
    </location>
    <ligand>
        <name>substrate</name>
        <note>ligand shared between dimeric partners</note>
    </ligand>
</feature>
<feature type="binding site" description="in other chain" evidence="1">
    <location>
        <begin position="169"/>
        <end position="171"/>
    </location>
    <ligand>
        <name>substrate</name>
        <note>ligand shared between dimeric partners</note>
    </ligand>
</feature>
<feature type="binding site" description="in other chain" evidence="1">
    <location>
        <begin position="185"/>
        <end position="187"/>
    </location>
    <ligand>
        <name>ADP</name>
        <dbReference type="ChEBI" id="CHEBI:456216"/>
        <note>allosteric activator; ligand shared between dimeric partners</note>
    </ligand>
</feature>
<feature type="binding site" description="in other chain" evidence="1">
    <location>
        <position position="211"/>
    </location>
    <ligand>
        <name>ADP</name>
        <dbReference type="ChEBI" id="CHEBI:456216"/>
        <note>allosteric activator; ligand shared between dimeric partners</note>
    </ligand>
</feature>
<feature type="binding site" description="in other chain" evidence="1">
    <location>
        <begin position="213"/>
        <end position="215"/>
    </location>
    <ligand>
        <name>ADP</name>
        <dbReference type="ChEBI" id="CHEBI:456216"/>
        <note>allosteric activator; ligand shared between dimeric partners</note>
    </ligand>
</feature>
<feature type="binding site" description="in other chain" evidence="1">
    <location>
        <position position="222"/>
    </location>
    <ligand>
        <name>substrate</name>
        <note>ligand shared between dimeric partners</note>
    </ligand>
</feature>
<feature type="binding site" evidence="1">
    <location>
        <position position="243"/>
    </location>
    <ligand>
        <name>substrate</name>
        <note>ligand shared between dimeric partners</note>
    </ligand>
</feature>
<feature type="binding site" description="in other chain" evidence="1">
    <location>
        <begin position="249"/>
        <end position="252"/>
    </location>
    <ligand>
        <name>substrate</name>
        <note>ligand shared between dimeric partners</note>
    </ligand>
</feature>
<name>PFKA_NATTJ</name>
<organism>
    <name type="scientific">Natranaerobius thermophilus (strain ATCC BAA-1301 / DSM 18059 / JW/NM-WN-LF)</name>
    <dbReference type="NCBI Taxonomy" id="457570"/>
    <lineage>
        <taxon>Bacteria</taxon>
        <taxon>Bacillati</taxon>
        <taxon>Bacillota</taxon>
        <taxon>Clostridia</taxon>
        <taxon>Natranaerobiales</taxon>
        <taxon>Natranaerobiaceae</taxon>
        <taxon>Natranaerobius</taxon>
    </lineage>
</organism>
<keyword id="KW-0021">Allosteric enzyme</keyword>
<keyword id="KW-0067">ATP-binding</keyword>
<keyword id="KW-0963">Cytoplasm</keyword>
<keyword id="KW-0324">Glycolysis</keyword>
<keyword id="KW-0418">Kinase</keyword>
<keyword id="KW-0460">Magnesium</keyword>
<keyword id="KW-0479">Metal-binding</keyword>
<keyword id="KW-0547">Nucleotide-binding</keyword>
<keyword id="KW-1185">Reference proteome</keyword>
<keyword id="KW-0808">Transferase</keyword>
<proteinExistence type="inferred from homology"/>
<accession>B2A6Y0</accession>
<sequence length="319" mass="34618">MKKIGVLTSGGDSPGMNATIRAVVRRGIYMGLDIYGIYYGFSGLINGNIEKLEIGSVGDIIHRGGTILHTSRSEEFKTEMGQQKGFDNLKELGIEGLIVIGGDGSFKGAEKLSQMGLPVIGVPGTIDNDIPETEMSIGFDTALNTVIEAIDRIRDTATSHERIFVIEVMGRDCGNLALWSGLAGGAESVLIPEIDYDMEKVIERLKHGYKRGKKHSIIIVAEGVKPGAEIGKEIKERAGLDNRVTVLGHVQRGGTPTAYDRMLGSRLGAKAVDLLVAGESDKMIGMRDYKLVPVQFKDVFSKIEEPDYDIYELSQSLSI</sequence>
<reference key="1">
    <citation type="submission" date="2008-04" db="EMBL/GenBank/DDBJ databases">
        <title>Complete sequence of chromosome of Natranaerobius thermophilus JW/NM-WN-LF.</title>
        <authorList>
            <consortium name="US DOE Joint Genome Institute"/>
            <person name="Copeland A."/>
            <person name="Lucas S."/>
            <person name="Lapidus A."/>
            <person name="Glavina del Rio T."/>
            <person name="Dalin E."/>
            <person name="Tice H."/>
            <person name="Bruce D."/>
            <person name="Goodwin L."/>
            <person name="Pitluck S."/>
            <person name="Chertkov O."/>
            <person name="Brettin T."/>
            <person name="Detter J.C."/>
            <person name="Han C."/>
            <person name="Kuske C.R."/>
            <person name="Schmutz J."/>
            <person name="Larimer F."/>
            <person name="Land M."/>
            <person name="Hauser L."/>
            <person name="Kyrpides N."/>
            <person name="Lykidis A."/>
            <person name="Mesbah N.M."/>
            <person name="Wiegel J."/>
        </authorList>
    </citation>
    <scope>NUCLEOTIDE SEQUENCE [LARGE SCALE GENOMIC DNA]</scope>
    <source>
        <strain>ATCC BAA-1301 / DSM 18059 / JW/NM-WN-LF</strain>
    </source>
</reference>
<gene>
    <name evidence="1" type="primary">pfkA</name>
    <name type="ordered locus">Nther_2004</name>
</gene>
<evidence type="ECO:0000255" key="1">
    <source>
        <dbReference type="HAMAP-Rule" id="MF_00339"/>
    </source>
</evidence>
<comment type="function">
    <text evidence="1">Catalyzes the phosphorylation of D-fructose 6-phosphate to fructose 1,6-bisphosphate by ATP, the first committing step of glycolysis.</text>
</comment>
<comment type="catalytic activity">
    <reaction evidence="1">
        <text>beta-D-fructose 6-phosphate + ATP = beta-D-fructose 1,6-bisphosphate + ADP + H(+)</text>
        <dbReference type="Rhea" id="RHEA:16109"/>
        <dbReference type="ChEBI" id="CHEBI:15378"/>
        <dbReference type="ChEBI" id="CHEBI:30616"/>
        <dbReference type="ChEBI" id="CHEBI:32966"/>
        <dbReference type="ChEBI" id="CHEBI:57634"/>
        <dbReference type="ChEBI" id="CHEBI:456216"/>
        <dbReference type="EC" id="2.7.1.11"/>
    </reaction>
</comment>
<comment type="cofactor">
    <cofactor evidence="1">
        <name>Mg(2+)</name>
        <dbReference type="ChEBI" id="CHEBI:18420"/>
    </cofactor>
</comment>
<comment type="activity regulation">
    <text evidence="1">Allosterically activated by ADP and other diphosphonucleosides, and allosterically inhibited by phosphoenolpyruvate.</text>
</comment>
<comment type="pathway">
    <text evidence="1">Carbohydrate degradation; glycolysis; D-glyceraldehyde 3-phosphate and glycerone phosphate from D-glucose: step 3/4.</text>
</comment>
<comment type="subunit">
    <text evidence="1">Homotetramer.</text>
</comment>
<comment type="subcellular location">
    <subcellularLocation>
        <location evidence="1">Cytoplasm</location>
    </subcellularLocation>
</comment>
<comment type="similarity">
    <text evidence="1">Belongs to the phosphofructokinase type A (PFKA) family. ATP-dependent PFK group I subfamily. Prokaryotic clade 'B1' sub-subfamily.</text>
</comment>
<protein>
    <recommendedName>
        <fullName evidence="1">ATP-dependent 6-phosphofructokinase</fullName>
        <shortName evidence="1">ATP-PFK</shortName>
        <shortName evidence="1">Phosphofructokinase</shortName>
        <ecNumber evidence="1">2.7.1.11</ecNumber>
    </recommendedName>
    <alternativeName>
        <fullName evidence="1">Phosphohexokinase</fullName>
    </alternativeName>
</protein>
<dbReference type="EC" id="2.7.1.11" evidence="1"/>
<dbReference type="EMBL" id="CP001034">
    <property type="protein sequence ID" value="ACB85571.1"/>
    <property type="molecule type" value="Genomic_DNA"/>
</dbReference>
<dbReference type="RefSeq" id="WP_012448428.1">
    <property type="nucleotide sequence ID" value="NC_010718.1"/>
</dbReference>
<dbReference type="SMR" id="B2A6Y0"/>
<dbReference type="FunCoup" id="B2A6Y0">
    <property type="interactions" value="305"/>
</dbReference>
<dbReference type="STRING" id="457570.Nther_2004"/>
<dbReference type="KEGG" id="nth:Nther_2004"/>
<dbReference type="eggNOG" id="COG0205">
    <property type="taxonomic scope" value="Bacteria"/>
</dbReference>
<dbReference type="HOGENOM" id="CLU_020655_0_1_9"/>
<dbReference type="InParanoid" id="B2A6Y0"/>
<dbReference type="OrthoDB" id="9802503at2"/>
<dbReference type="UniPathway" id="UPA00109">
    <property type="reaction ID" value="UER00182"/>
</dbReference>
<dbReference type="Proteomes" id="UP000001683">
    <property type="component" value="Chromosome"/>
</dbReference>
<dbReference type="GO" id="GO:0005945">
    <property type="term" value="C:6-phosphofructokinase complex"/>
    <property type="evidence" value="ECO:0007669"/>
    <property type="project" value="TreeGrafter"/>
</dbReference>
<dbReference type="GO" id="GO:0003872">
    <property type="term" value="F:6-phosphofructokinase activity"/>
    <property type="evidence" value="ECO:0007669"/>
    <property type="project" value="UniProtKB-UniRule"/>
</dbReference>
<dbReference type="GO" id="GO:0016208">
    <property type="term" value="F:AMP binding"/>
    <property type="evidence" value="ECO:0007669"/>
    <property type="project" value="TreeGrafter"/>
</dbReference>
<dbReference type="GO" id="GO:0005524">
    <property type="term" value="F:ATP binding"/>
    <property type="evidence" value="ECO:0007669"/>
    <property type="project" value="UniProtKB-KW"/>
</dbReference>
<dbReference type="GO" id="GO:0070095">
    <property type="term" value="F:fructose-6-phosphate binding"/>
    <property type="evidence" value="ECO:0007669"/>
    <property type="project" value="TreeGrafter"/>
</dbReference>
<dbReference type="GO" id="GO:0042802">
    <property type="term" value="F:identical protein binding"/>
    <property type="evidence" value="ECO:0007669"/>
    <property type="project" value="TreeGrafter"/>
</dbReference>
<dbReference type="GO" id="GO:0046872">
    <property type="term" value="F:metal ion binding"/>
    <property type="evidence" value="ECO:0007669"/>
    <property type="project" value="UniProtKB-KW"/>
</dbReference>
<dbReference type="GO" id="GO:0048029">
    <property type="term" value="F:monosaccharide binding"/>
    <property type="evidence" value="ECO:0007669"/>
    <property type="project" value="TreeGrafter"/>
</dbReference>
<dbReference type="GO" id="GO:0061621">
    <property type="term" value="P:canonical glycolysis"/>
    <property type="evidence" value="ECO:0007669"/>
    <property type="project" value="TreeGrafter"/>
</dbReference>
<dbReference type="GO" id="GO:0030388">
    <property type="term" value="P:fructose 1,6-bisphosphate metabolic process"/>
    <property type="evidence" value="ECO:0007669"/>
    <property type="project" value="TreeGrafter"/>
</dbReference>
<dbReference type="GO" id="GO:0006002">
    <property type="term" value="P:fructose 6-phosphate metabolic process"/>
    <property type="evidence" value="ECO:0007669"/>
    <property type="project" value="InterPro"/>
</dbReference>
<dbReference type="FunFam" id="3.40.50.450:FF:000001">
    <property type="entry name" value="ATP-dependent 6-phosphofructokinase"/>
    <property type="match status" value="1"/>
</dbReference>
<dbReference type="FunFam" id="3.40.50.460:FF:000002">
    <property type="entry name" value="ATP-dependent 6-phosphofructokinase"/>
    <property type="match status" value="1"/>
</dbReference>
<dbReference type="Gene3D" id="3.40.50.450">
    <property type="match status" value="1"/>
</dbReference>
<dbReference type="Gene3D" id="3.40.50.460">
    <property type="entry name" value="Phosphofructokinase domain"/>
    <property type="match status" value="1"/>
</dbReference>
<dbReference type="HAMAP" id="MF_00339">
    <property type="entry name" value="Phosphofructokinase_I_B1"/>
    <property type="match status" value="1"/>
</dbReference>
<dbReference type="InterPro" id="IPR022953">
    <property type="entry name" value="ATP_PFK"/>
</dbReference>
<dbReference type="InterPro" id="IPR012003">
    <property type="entry name" value="ATP_PFK_prok-type"/>
</dbReference>
<dbReference type="InterPro" id="IPR012828">
    <property type="entry name" value="PFKA_ATP_prok"/>
</dbReference>
<dbReference type="InterPro" id="IPR015912">
    <property type="entry name" value="Phosphofructokinase_CS"/>
</dbReference>
<dbReference type="InterPro" id="IPR000023">
    <property type="entry name" value="Phosphofructokinase_dom"/>
</dbReference>
<dbReference type="InterPro" id="IPR035966">
    <property type="entry name" value="PKF_sf"/>
</dbReference>
<dbReference type="NCBIfam" id="TIGR02482">
    <property type="entry name" value="PFKA_ATP"/>
    <property type="match status" value="1"/>
</dbReference>
<dbReference type="NCBIfam" id="NF002872">
    <property type="entry name" value="PRK03202.1"/>
    <property type="match status" value="1"/>
</dbReference>
<dbReference type="PANTHER" id="PTHR13697:SF4">
    <property type="entry name" value="ATP-DEPENDENT 6-PHOSPHOFRUCTOKINASE"/>
    <property type="match status" value="1"/>
</dbReference>
<dbReference type="PANTHER" id="PTHR13697">
    <property type="entry name" value="PHOSPHOFRUCTOKINASE"/>
    <property type="match status" value="1"/>
</dbReference>
<dbReference type="Pfam" id="PF00365">
    <property type="entry name" value="PFK"/>
    <property type="match status" value="1"/>
</dbReference>
<dbReference type="PIRSF" id="PIRSF000532">
    <property type="entry name" value="ATP_PFK_prok"/>
    <property type="match status" value="1"/>
</dbReference>
<dbReference type="PRINTS" id="PR00476">
    <property type="entry name" value="PHFRCTKINASE"/>
</dbReference>
<dbReference type="SUPFAM" id="SSF53784">
    <property type="entry name" value="Phosphofructokinase"/>
    <property type="match status" value="1"/>
</dbReference>
<dbReference type="PROSITE" id="PS00433">
    <property type="entry name" value="PHOSPHOFRUCTOKINASE"/>
    <property type="match status" value="1"/>
</dbReference>